<keyword id="KW-0963">Cytoplasm</keyword>
<keyword id="KW-0520">NAD</keyword>
<keyword id="KW-0521">NADP</keyword>
<keyword id="KW-0560">Oxidoreductase</keyword>
<protein>
    <recommendedName>
        <fullName evidence="1">Glyoxylate/hydroxypyruvate reductase B</fullName>
        <ecNumber evidence="1">1.1.1.79</ecNumber>
        <ecNumber evidence="1">1.1.1.81</ecNumber>
    </recommendedName>
</protein>
<comment type="function">
    <text evidence="1">Catalyzes the NADPH-dependent reduction of glyoxylate and hydroxypyruvate into glycolate and glycerate, respectively.</text>
</comment>
<comment type="catalytic activity">
    <reaction evidence="1">
        <text>glycolate + NADP(+) = glyoxylate + NADPH + H(+)</text>
        <dbReference type="Rhea" id="RHEA:10992"/>
        <dbReference type="ChEBI" id="CHEBI:15378"/>
        <dbReference type="ChEBI" id="CHEBI:29805"/>
        <dbReference type="ChEBI" id="CHEBI:36655"/>
        <dbReference type="ChEBI" id="CHEBI:57783"/>
        <dbReference type="ChEBI" id="CHEBI:58349"/>
        <dbReference type="EC" id="1.1.1.79"/>
    </reaction>
</comment>
<comment type="catalytic activity">
    <reaction evidence="1">
        <text>(R)-glycerate + NAD(+) = 3-hydroxypyruvate + NADH + H(+)</text>
        <dbReference type="Rhea" id="RHEA:17905"/>
        <dbReference type="ChEBI" id="CHEBI:15378"/>
        <dbReference type="ChEBI" id="CHEBI:16659"/>
        <dbReference type="ChEBI" id="CHEBI:17180"/>
        <dbReference type="ChEBI" id="CHEBI:57540"/>
        <dbReference type="ChEBI" id="CHEBI:57945"/>
        <dbReference type="EC" id="1.1.1.81"/>
    </reaction>
</comment>
<comment type="catalytic activity">
    <reaction evidence="1">
        <text>(R)-glycerate + NADP(+) = 3-hydroxypyruvate + NADPH + H(+)</text>
        <dbReference type="Rhea" id="RHEA:18657"/>
        <dbReference type="ChEBI" id="CHEBI:15378"/>
        <dbReference type="ChEBI" id="CHEBI:16659"/>
        <dbReference type="ChEBI" id="CHEBI:17180"/>
        <dbReference type="ChEBI" id="CHEBI:57783"/>
        <dbReference type="ChEBI" id="CHEBI:58349"/>
        <dbReference type="EC" id="1.1.1.81"/>
    </reaction>
</comment>
<comment type="subunit">
    <text evidence="1">Homodimer.</text>
</comment>
<comment type="subcellular location">
    <subcellularLocation>
        <location evidence="1">Cytoplasm</location>
    </subcellularLocation>
</comment>
<comment type="similarity">
    <text evidence="1">Belongs to the D-isomer specific 2-hydroxyacid dehydrogenase family. GhrB subfamily.</text>
</comment>
<dbReference type="EC" id="1.1.1.79" evidence="1"/>
<dbReference type="EC" id="1.1.1.81" evidence="1"/>
<dbReference type="EMBL" id="CP001144">
    <property type="protein sequence ID" value="ACH76804.1"/>
    <property type="molecule type" value="Genomic_DNA"/>
</dbReference>
<dbReference type="RefSeq" id="WP_000804678.1">
    <property type="nucleotide sequence ID" value="NC_011205.1"/>
</dbReference>
<dbReference type="SMR" id="B5FLC2"/>
<dbReference type="KEGG" id="sed:SeD_A4029"/>
<dbReference type="HOGENOM" id="CLU_019796_1_2_6"/>
<dbReference type="Proteomes" id="UP000008322">
    <property type="component" value="Chromosome"/>
</dbReference>
<dbReference type="GO" id="GO:0005829">
    <property type="term" value="C:cytosol"/>
    <property type="evidence" value="ECO:0007669"/>
    <property type="project" value="TreeGrafter"/>
</dbReference>
<dbReference type="GO" id="GO:0005886">
    <property type="term" value="C:plasma membrane"/>
    <property type="evidence" value="ECO:0007669"/>
    <property type="project" value="UniProtKB-UniRule"/>
</dbReference>
<dbReference type="GO" id="GO:0030267">
    <property type="term" value="F:glyoxylate reductase (NADPH) activity"/>
    <property type="evidence" value="ECO:0007669"/>
    <property type="project" value="UniProtKB-UniRule"/>
</dbReference>
<dbReference type="GO" id="GO:0008465">
    <property type="term" value="F:hydroxypyruvate reductase (NADH) activity"/>
    <property type="evidence" value="ECO:0007669"/>
    <property type="project" value="RHEA"/>
</dbReference>
<dbReference type="GO" id="GO:0120509">
    <property type="term" value="F:hydroxypyruvate reductase (NADPH) activity"/>
    <property type="evidence" value="ECO:0007669"/>
    <property type="project" value="RHEA"/>
</dbReference>
<dbReference type="GO" id="GO:0051287">
    <property type="term" value="F:NAD binding"/>
    <property type="evidence" value="ECO:0007669"/>
    <property type="project" value="InterPro"/>
</dbReference>
<dbReference type="CDD" id="cd05301">
    <property type="entry name" value="GDH"/>
    <property type="match status" value="1"/>
</dbReference>
<dbReference type="FunFam" id="3.40.50.720:FF:000026">
    <property type="entry name" value="Glyoxylate/hydroxypyruvate reductase B"/>
    <property type="match status" value="1"/>
</dbReference>
<dbReference type="Gene3D" id="3.40.50.720">
    <property type="entry name" value="NAD(P)-binding Rossmann-like Domain"/>
    <property type="match status" value="2"/>
</dbReference>
<dbReference type="HAMAP" id="MF_01667">
    <property type="entry name" value="2_Hacid_dh_C_GhrB"/>
    <property type="match status" value="1"/>
</dbReference>
<dbReference type="InterPro" id="IPR050223">
    <property type="entry name" value="D-isomer_2-hydroxyacid_DH"/>
</dbReference>
<dbReference type="InterPro" id="IPR006139">
    <property type="entry name" value="D-isomer_2_OHA_DH_cat_dom"/>
</dbReference>
<dbReference type="InterPro" id="IPR029753">
    <property type="entry name" value="D-isomer_DH_CS"/>
</dbReference>
<dbReference type="InterPro" id="IPR006140">
    <property type="entry name" value="D-isomer_DH_NAD-bd"/>
</dbReference>
<dbReference type="InterPro" id="IPR023756">
    <property type="entry name" value="Glyo/OHPyrv_Rdtase_B"/>
</dbReference>
<dbReference type="InterPro" id="IPR036291">
    <property type="entry name" value="NAD(P)-bd_dom_sf"/>
</dbReference>
<dbReference type="NCBIfam" id="NF011938">
    <property type="entry name" value="PRK15409.1"/>
    <property type="match status" value="1"/>
</dbReference>
<dbReference type="PANTHER" id="PTHR10996">
    <property type="entry name" value="2-HYDROXYACID DEHYDROGENASE-RELATED"/>
    <property type="match status" value="1"/>
</dbReference>
<dbReference type="PANTHER" id="PTHR10996:SF283">
    <property type="entry name" value="GLYOXYLATE_HYDROXYPYRUVATE REDUCTASE B"/>
    <property type="match status" value="1"/>
</dbReference>
<dbReference type="Pfam" id="PF00389">
    <property type="entry name" value="2-Hacid_dh"/>
    <property type="match status" value="1"/>
</dbReference>
<dbReference type="Pfam" id="PF02826">
    <property type="entry name" value="2-Hacid_dh_C"/>
    <property type="match status" value="1"/>
</dbReference>
<dbReference type="SUPFAM" id="SSF52283">
    <property type="entry name" value="Formate/glycerate dehydrogenase catalytic domain-like"/>
    <property type="match status" value="1"/>
</dbReference>
<dbReference type="SUPFAM" id="SSF51735">
    <property type="entry name" value="NAD(P)-binding Rossmann-fold domains"/>
    <property type="match status" value="1"/>
</dbReference>
<dbReference type="PROSITE" id="PS00670">
    <property type="entry name" value="D_2_HYDROXYACID_DH_2"/>
    <property type="match status" value="1"/>
</dbReference>
<dbReference type="PROSITE" id="PS00671">
    <property type="entry name" value="D_2_HYDROXYACID_DH_3"/>
    <property type="match status" value="1"/>
</dbReference>
<feature type="chain" id="PRO_1000187295" description="Glyoxylate/hydroxypyruvate reductase B">
    <location>
        <begin position="1"/>
        <end position="324"/>
    </location>
</feature>
<feature type="active site" evidence="1">
    <location>
        <position position="237"/>
    </location>
</feature>
<feature type="active site" evidence="1">
    <location>
        <position position="266"/>
    </location>
</feature>
<feature type="active site" description="Proton donor" evidence="1">
    <location>
        <position position="285"/>
    </location>
</feature>
<evidence type="ECO:0000255" key="1">
    <source>
        <dbReference type="HAMAP-Rule" id="MF_01667"/>
    </source>
</evidence>
<gene>
    <name evidence="1" type="primary">ghrB</name>
    <name type="ordered locus">SeD_A4029</name>
</gene>
<accession>B5FLC2</accession>
<organism>
    <name type="scientific">Salmonella dublin (strain CT_02021853)</name>
    <dbReference type="NCBI Taxonomy" id="439851"/>
    <lineage>
        <taxon>Bacteria</taxon>
        <taxon>Pseudomonadati</taxon>
        <taxon>Pseudomonadota</taxon>
        <taxon>Gammaproteobacteria</taxon>
        <taxon>Enterobacterales</taxon>
        <taxon>Enterobacteriaceae</taxon>
        <taxon>Salmonella</taxon>
    </lineage>
</organism>
<sequence>MKPSIILYKTLPDDLLHRLEAHFTVTQVPNLHPETVARHAQAFASAQGLLGASETVNRALLEKMPALRAASTISVGYDNVEVDALTARKIVLMHTPAVLTETVADTVMALMLATARRVVDVAERVKAGEWTESIGPAWFGVDVHHKTLGIVGMGRIGMALAQRAHFGFTMPVLYHARRRHQEAEDRFNARYCDLDTLLQEADFVCVILPLTAETRHLFGATQFARMKSSAIFINAGRGPVVDENALIAALQNGEIYAAGLDVFEQEPLSVDSPLLNMSNVVAVPHIGSATHETRYNMMACAVDNLIDALQGKIEKNCVNPQAAG</sequence>
<name>GHRB_SALDC</name>
<reference key="1">
    <citation type="journal article" date="2011" name="J. Bacteriol.">
        <title>Comparative genomics of 28 Salmonella enterica isolates: evidence for CRISPR-mediated adaptive sublineage evolution.</title>
        <authorList>
            <person name="Fricke W.F."/>
            <person name="Mammel M.K."/>
            <person name="McDermott P.F."/>
            <person name="Tartera C."/>
            <person name="White D.G."/>
            <person name="Leclerc J.E."/>
            <person name="Ravel J."/>
            <person name="Cebula T.A."/>
        </authorList>
    </citation>
    <scope>NUCLEOTIDE SEQUENCE [LARGE SCALE GENOMIC DNA]</scope>
    <source>
        <strain>CT_02021853</strain>
    </source>
</reference>
<proteinExistence type="inferred from homology"/>